<gene>
    <name evidence="1" type="primary">rpsD</name>
    <name type="ordered locus">SAOUHSC_01829</name>
</gene>
<organism>
    <name type="scientific">Staphylococcus aureus (strain NCTC 8325 / PS 47)</name>
    <dbReference type="NCBI Taxonomy" id="93061"/>
    <lineage>
        <taxon>Bacteria</taxon>
        <taxon>Bacillati</taxon>
        <taxon>Bacillota</taxon>
        <taxon>Bacilli</taxon>
        <taxon>Bacillales</taxon>
        <taxon>Staphylococcaceae</taxon>
        <taxon>Staphylococcus</taxon>
    </lineage>
</organism>
<comment type="function">
    <text evidence="1">One of the primary rRNA binding proteins, it binds directly to 16S rRNA where it nucleates assembly of the body of the 30S subunit.</text>
</comment>
<comment type="function">
    <text evidence="1">With S5 and S12 plays an important role in translational accuracy.</text>
</comment>
<comment type="subunit">
    <text evidence="1">Part of the 30S ribosomal subunit. Contacts protein S5. The interaction surface between S4 and S5 is involved in control of translational fidelity.</text>
</comment>
<comment type="similarity">
    <text evidence="1">Belongs to the universal ribosomal protein uS4 family.</text>
</comment>
<protein>
    <recommendedName>
        <fullName evidence="1">Small ribosomal subunit protein uS4</fullName>
    </recommendedName>
    <alternativeName>
        <fullName evidence="2">30S ribosomal protein S4</fullName>
    </alternativeName>
</protein>
<keyword id="KW-0002">3D-structure</keyword>
<keyword id="KW-1185">Reference proteome</keyword>
<keyword id="KW-0687">Ribonucleoprotein</keyword>
<keyword id="KW-0689">Ribosomal protein</keyword>
<keyword id="KW-0694">RNA-binding</keyword>
<keyword id="KW-0699">rRNA-binding</keyword>
<reference key="1">
    <citation type="book" date="2006" name="Gram positive pathogens, 2nd edition">
        <title>The Staphylococcus aureus NCTC 8325 genome.</title>
        <editorList>
            <person name="Fischetti V."/>
            <person name="Novick R."/>
            <person name="Ferretti J."/>
            <person name="Portnoy D."/>
            <person name="Rood J."/>
        </editorList>
        <authorList>
            <person name="Gillaspy A.F."/>
            <person name="Worrell V."/>
            <person name="Orvis J."/>
            <person name="Roe B.A."/>
            <person name="Dyer D.W."/>
            <person name="Iandolo J.J."/>
        </authorList>
    </citation>
    <scope>NUCLEOTIDE SEQUENCE [LARGE SCALE GENOMIC DNA]</scope>
    <source>
        <strain>NCTC 8325 / PS 47</strain>
    </source>
</reference>
<name>RS4_STAA8</name>
<sequence length="200" mass="23013">MARFRGSNWKKSRRLGISLSGTGKELEKRPYAPGQHGPNQRKKLSEYGLQLREKQKLRYLYGMTERQFRNTFDIAGKKFGVHGENFMILLASRLDAVVYSLGLARTRRQARQLVNHGHILVDGKRVDIPSYSVKPGQTISVREKSQKLNIIVESVEINNFVPEYLNFDADSLTGTFVRLPERSELPAEINEQLIVEYYSR</sequence>
<feature type="chain" id="PRO_0000293375" description="Small ribosomal subunit protein uS4">
    <location>
        <begin position="1"/>
        <end position="200"/>
    </location>
</feature>
<feature type="domain" description="S4 RNA-binding" evidence="1">
    <location>
        <begin position="92"/>
        <end position="155"/>
    </location>
</feature>
<feature type="helix" evidence="4">
    <location>
        <begin position="10"/>
        <end position="15"/>
    </location>
</feature>
<feature type="strand" evidence="4">
    <location>
        <begin position="19"/>
        <end position="22"/>
    </location>
</feature>
<feature type="strand" evidence="4">
    <location>
        <begin position="37"/>
        <end position="39"/>
    </location>
</feature>
<feature type="helix" evidence="4">
    <location>
        <begin position="46"/>
        <end position="61"/>
    </location>
</feature>
<feature type="helix" evidence="4">
    <location>
        <begin position="65"/>
        <end position="77"/>
    </location>
</feature>
<feature type="strand" evidence="4">
    <location>
        <begin position="78"/>
        <end position="80"/>
    </location>
</feature>
<feature type="helix" evidence="4">
    <location>
        <begin position="82"/>
        <end position="91"/>
    </location>
</feature>
<feature type="helix" evidence="4">
    <location>
        <begin position="94"/>
        <end position="100"/>
    </location>
</feature>
<feature type="strand" evidence="3">
    <location>
        <begin position="103"/>
        <end position="106"/>
    </location>
</feature>
<feature type="helix" evidence="4">
    <location>
        <begin position="107"/>
        <end position="116"/>
    </location>
</feature>
<feature type="strand" evidence="4">
    <location>
        <begin position="119"/>
        <end position="121"/>
    </location>
</feature>
<feature type="strand" evidence="3">
    <location>
        <begin position="124"/>
        <end position="126"/>
    </location>
</feature>
<feature type="strand" evidence="4">
    <location>
        <begin position="138"/>
        <end position="141"/>
    </location>
</feature>
<feature type="helix" evidence="4">
    <location>
        <begin position="143"/>
        <end position="145"/>
    </location>
</feature>
<feature type="helix" evidence="4">
    <location>
        <begin position="149"/>
        <end position="155"/>
    </location>
</feature>
<feature type="strand" evidence="4">
    <location>
        <begin position="166"/>
        <end position="168"/>
    </location>
</feature>
<feature type="turn" evidence="4">
    <location>
        <begin position="169"/>
        <end position="172"/>
    </location>
</feature>
<feature type="strand" evidence="4">
    <location>
        <begin position="173"/>
        <end position="175"/>
    </location>
</feature>
<feature type="turn" evidence="4">
    <location>
        <begin position="182"/>
        <end position="184"/>
    </location>
</feature>
<feature type="helix" evidence="4">
    <location>
        <begin position="192"/>
        <end position="197"/>
    </location>
</feature>
<dbReference type="EMBL" id="CP000253">
    <property type="protein sequence ID" value="ABD30897.1"/>
    <property type="molecule type" value="Genomic_DNA"/>
</dbReference>
<dbReference type="RefSeq" id="WP_000090512.1">
    <property type="nucleotide sequence ID" value="NZ_LS483365.1"/>
</dbReference>
<dbReference type="RefSeq" id="YP_500334.1">
    <property type="nucleotide sequence ID" value="NC_007795.1"/>
</dbReference>
<dbReference type="PDB" id="5LI0">
    <property type="method" value="EM"/>
    <property type="resolution" value="3.80 A"/>
    <property type="chains" value="d=2-200"/>
</dbReference>
<dbReference type="PDB" id="5ND8">
    <property type="method" value="EM"/>
    <property type="resolution" value="3.70 A"/>
    <property type="chains" value="d=1-200"/>
</dbReference>
<dbReference type="PDB" id="5ND9">
    <property type="method" value="EM"/>
    <property type="resolution" value="3.70 A"/>
    <property type="chains" value="d=1-200"/>
</dbReference>
<dbReference type="PDB" id="5TCU">
    <property type="method" value="EM"/>
    <property type="resolution" value="3.90 A"/>
    <property type="chains" value="SC=3-200"/>
</dbReference>
<dbReference type="PDB" id="6YEF">
    <property type="method" value="EM"/>
    <property type="resolution" value="3.20 A"/>
    <property type="chains" value="d=1-200"/>
</dbReference>
<dbReference type="PDB" id="7BGD">
    <property type="method" value="EM"/>
    <property type="resolution" value="3.20 A"/>
    <property type="chains" value="d=1-200"/>
</dbReference>
<dbReference type="PDB" id="7KWG">
    <property type="method" value="EM"/>
    <property type="resolution" value="3.75 A"/>
    <property type="chains" value="d=1-200"/>
</dbReference>
<dbReference type="PDB" id="7NHL">
    <property type="method" value="EM"/>
    <property type="resolution" value="3.10 A"/>
    <property type="chains" value="e=1-200"/>
</dbReference>
<dbReference type="PDB" id="7NHM">
    <property type="method" value="EM"/>
    <property type="resolution" value="3.10 A"/>
    <property type="chains" value="e=1-200"/>
</dbReference>
<dbReference type="PDB" id="8BH6">
    <property type="method" value="EM"/>
    <property type="resolution" value="3.70 A"/>
    <property type="chains" value="d=1-200"/>
</dbReference>
<dbReference type="PDB" id="8BH7">
    <property type="method" value="EM"/>
    <property type="resolution" value="4.23 A"/>
    <property type="chains" value="d=1-200"/>
</dbReference>
<dbReference type="PDB" id="8BYV">
    <property type="method" value="EM"/>
    <property type="resolution" value="2.89 A"/>
    <property type="chains" value="d=1-200"/>
</dbReference>
<dbReference type="PDB" id="8P2F">
    <property type="method" value="EM"/>
    <property type="resolution" value="2.44 A"/>
    <property type="chains" value="e=1-200"/>
</dbReference>
<dbReference type="PDB" id="8P2G">
    <property type="method" value="EM"/>
    <property type="resolution" value="2.02 A"/>
    <property type="chains" value="e=1-200"/>
</dbReference>
<dbReference type="PDB" id="8P2H">
    <property type="method" value="EM"/>
    <property type="resolution" value="2.49 A"/>
    <property type="chains" value="e=1-200"/>
</dbReference>
<dbReference type="PDBsum" id="5LI0"/>
<dbReference type="PDBsum" id="5ND8"/>
<dbReference type="PDBsum" id="5ND9"/>
<dbReference type="PDBsum" id="5TCU"/>
<dbReference type="PDBsum" id="6YEF"/>
<dbReference type="PDBsum" id="7BGD"/>
<dbReference type="PDBsum" id="7KWG"/>
<dbReference type="PDBsum" id="7NHL"/>
<dbReference type="PDBsum" id="7NHM"/>
<dbReference type="PDBsum" id="8BH6"/>
<dbReference type="PDBsum" id="8BH7"/>
<dbReference type="PDBsum" id="8BYV"/>
<dbReference type="PDBsum" id="8P2F"/>
<dbReference type="PDBsum" id="8P2G"/>
<dbReference type="PDBsum" id="8P2H"/>
<dbReference type="EMDB" id="EMD-10791"/>
<dbReference type="EMDB" id="EMD-12178"/>
<dbReference type="EMDB" id="EMD-12332"/>
<dbReference type="EMDB" id="EMD-12333"/>
<dbReference type="EMDB" id="EMD-16048"/>
<dbReference type="EMDB" id="EMD-16049"/>
<dbReference type="EMDB" id="EMD-16334"/>
<dbReference type="EMDB" id="EMD-17363"/>
<dbReference type="EMDB" id="EMD-17364"/>
<dbReference type="EMDB" id="EMD-17365"/>
<dbReference type="EMDB" id="EMD-23052"/>
<dbReference type="EMDB" id="EMD-3624"/>
<dbReference type="EMDB" id="EMD-3625"/>
<dbReference type="EMDB" id="EMD-4050"/>
<dbReference type="EMDB" id="EMD-8402"/>
<dbReference type="SMR" id="Q2FXK6"/>
<dbReference type="IntAct" id="Q2FXK6">
    <property type="interactions" value="1"/>
</dbReference>
<dbReference type="STRING" id="93061.SAOUHSC_01829"/>
<dbReference type="PaxDb" id="1280-SAXN108_1748"/>
<dbReference type="GeneID" id="3921779"/>
<dbReference type="KEGG" id="sao:SAOUHSC_01829"/>
<dbReference type="PATRIC" id="fig|93061.5.peg.1668"/>
<dbReference type="eggNOG" id="COG0522">
    <property type="taxonomic scope" value="Bacteria"/>
</dbReference>
<dbReference type="HOGENOM" id="CLU_092403_0_1_9"/>
<dbReference type="OrthoDB" id="9803672at2"/>
<dbReference type="PRO" id="PR:Q2FXK6"/>
<dbReference type="Proteomes" id="UP000008816">
    <property type="component" value="Chromosome"/>
</dbReference>
<dbReference type="GO" id="GO:0015935">
    <property type="term" value="C:small ribosomal subunit"/>
    <property type="evidence" value="ECO:0000318"/>
    <property type="project" value="GO_Central"/>
</dbReference>
<dbReference type="GO" id="GO:0019843">
    <property type="term" value="F:rRNA binding"/>
    <property type="evidence" value="ECO:0000318"/>
    <property type="project" value="GO_Central"/>
</dbReference>
<dbReference type="GO" id="GO:0003735">
    <property type="term" value="F:structural constituent of ribosome"/>
    <property type="evidence" value="ECO:0000318"/>
    <property type="project" value="GO_Central"/>
</dbReference>
<dbReference type="GO" id="GO:0042274">
    <property type="term" value="P:ribosomal small subunit biogenesis"/>
    <property type="evidence" value="ECO:0000318"/>
    <property type="project" value="GO_Central"/>
</dbReference>
<dbReference type="GO" id="GO:0006412">
    <property type="term" value="P:translation"/>
    <property type="evidence" value="ECO:0007669"/>
    <property type="project" value="UniProtKB-UniRule"/>
</dbReference>
<dbReference type="CDD" id="cd00165">
    <property type="entry name" value="S4"/>
    <property type="match status" value="1"/>
</dbReference>
<dbReference type="FunFam" id="1.10.1050.10:FF:000001">
    <property type="entry name" value="30S ribosomal protein S4"/>
    <property type="match status" value="1"/>
</dbReference>
<dbReference type="FunFam" id="3.10.290.10:FF:000001">
    <property type="entry name" value="30S ribosomal protein S4"/>
    <property type="match status" value="1"/>
</dbReference>
<dbReference type="Gene3D" id="1.10.1050.10">
    <property type="entry name" value="Ribosomal Protein S4 Delta 41, Chain A, domain 1"/>
    <property type="match status" value="1"/>
</dbReference>
<dbReference type="Gene3D" id="3.10.290.10">
    <property type="entry name" value="RNA-binding S4 domain"/>
    <property type="match status" value="1"/>
</dbReference>
<dbReference type="HAMAP" id="MF_01306_B">
    <property type="entry name" value="Ribosomal_uS4_B"/>
    <property type="match status" value="1"/>
</dbReference>
<dbReference type="InterPro" id="IPR022801">
    <property type="entry name" value="Ribosomal_uS4"/>
</dbReference>
<dbReference type="InterPro" id="IPR005709">
    <property type="entry name" value="Ribosomal_uS4_bac-type"/>
</dbReference>
<dbReference type="InterPro" id="IPR018079">
    <property type="entry name" value="Ribosomal_uS4_CS"/>
</dbReference>
<dbReference type="InterPro" id="IPR001912">
    <property type="entry name" value="Ribosomal_uS4_N"/>
</dbReference>
<dbReference type="InterPro" id="IPR002942">
    <property type="entry name" value="S4_RNA-bd"/>
</dbReference>
<dbReference type="InterPro" id="IPR036986">
    <property type="entry name" value="S4_RNA-bd_sf"/>
</dbReference>
<dbReference type="NCBIfam" id="NF003717">
    <property type="entry name" value="PRK05327.1"/>
    <property type="match status" value="1"/>
</dbReference>
<dbReference type="NCBIfam" id="TIGR01017">
    <property type="entry name" value="rpsD_bact"/>
    <property type="match status" value="1"/>
</dbReference>
<dbReference type="PANTHER" id="PTHR11831">
    <property type="entry name" value="30S 40S RIBOSOMAL PROTEIN"/>
    <property type="match status" value="1"/>
</dbReference>
<dbReference type="PANTHER" id="PTHR11831:SF4">
    <property type="entry name" value="SMALL RIBOSOMAL SUBUNIT PROTEIN US4M"/>
    <property type="match status" value="1"/>
</dbReference>
<dbReference type="Pfam" id="PF00163">
    <property type="entry name" value="Ribosomal_S4"/>
    <property type="match status" value="1"/>
</dbReference>
<dbReference type="Pfam" id="PF01479">
    <property type="entry name" value="S4"/>
    <property type="match status" value="1"/>
</dbReference>
<dbReference type="SMART" id="SM01390">
    <property type="entry name" value="Ribosomal_S4"/>
    <property type="match status" value="1"/>
</dbReference>
<dbReference type="SMART" id="SM00363">
    <property type="entry name" value="S4"/>
    <property type="match status" value="1"/>
</dbReference>
<dbReference type="SUPFAM" id="SSF55174">
    <property type="entry name" value="Alpha-L RNA-binding motif"/>
    <property type="match status" value="1"/>
</dbReference>
<dbReference type="PROSITE" id="PS00632">
    <property type="entry name" value="RIBOSOMAL_S4"/>
    <property type="match status" value="1"/>
</dbReference>
<dbReference type="PROSITE" id="PS50889">
    <property type="entry name" value="S4"/>
    <property type="match status" value="1"/>
</dbReference>
<proteinExistence type="evidence at protein level"/>
<accession>Q2FXK6</accession>
<evidence type="ECO:0000255" key="1">
    <source>
        <dbReference type="HAMAP-Rule" id="MF_01306"/>
    </source>
</evidence>
<evidence type="ECO:0000305" key="2"/>
<evidence type="ECO:0007829" key="3">
    <source>
        <dbReference type="PDB" id="7BGD"/>
    </source>
</evidence>
<evidence type="ECO:0007829" key="4">
    <source>
        <dbReference type="PDB" id="8BYV"/>
    </source>
</evidence>